<name>LONM_MAIZE</name>
<sequence>MLRAAVAAAEELRSPLLRVIGTLRDGRGSVLLGRRVRFCSNSSASDTEAAVAEAEAKAEDASAAEGEADSKASSAIVPTSTNIDDCLSVIALPLPHRPLFPGFYMPINVKDQKLLQALIENRKRSAPYAGAFLVKDEEGTDPNIVTGSDSAKSIDDLKGKDLLKRLHEVGTLAQITSIQGDHVVLLGHRRLRITEMVEEDPLTVKVDHLKEKPYNKDDDVMKATSFEVISTLREVLRTSSLWKDHVQTYTQHIGDFNYQRLADFGAAISGANKLLCQEVLEELDVYKRLKLTLELVKKEMEISKLQQSIAKAIEEKISGDQRRYLLNEQLKAIKKELGLETDDKTALSAKFRERIESKKDKCPPHVLQVIEEELTKLQLLEASSSEFSVTRNYLDWLTVLPWGNYSDENFDVHHAQKILDEDHYGLSDVKERILEFIAVGKLRGTSQGKIICLSGPPGVGKTSIGRSIARALNRQFYRFSVGGLADVAEIKGHRRTYVGAMPGKMVQCLKSVGTANPLVLIDEIDKLGKGHSGDPASALLELLDPEQNVNFLDHYLDVPIDLSKVLFVCTANVIEMIPNPLLDRMEIIAIAGYITDEKMHIARDYLEKNTRQACGIKPEQVEVTDTALLALIENYCREAGVRNLQKQIEKIYRKIALQLVRQGVSNEPDHESVSASVTEESGNGDNTTTKDEILKDPAVEDASVTNNVTNPASEEANEENLTSEAAKEDSTSKGNKGTDGAADKAIEKVVVDSSNLGDFVGKPVFQAERIYEHTPVGVVMGLAWTAMGGSTLYIETKKVEEREGKGALVLTGQLGDVMKESAQIAHTVGRAVLLEKEPDNHFFANSKVHLHVPAGSTPKDGPSAGCTMITSMLSLAMGKPVKKDLAMTGEVTLTGRILPIGGVKEKTIAARRSAIKTLIFPAANKRDFDELASNVKEGLEVHFVDTYSEIYDLAFQSDAGTETS</sequence>
<dbReference type="EC" id="3.4.21.53" evidence="2"/>
<dbReference type="EMBL" id="U85495">
    <property type="protein sequence ID" value="AAC50021.1"/>
    <property type="molecule type" value="mRNA"/>
</dbReference>
<dbReference type="PIR" id="T04325">
    <property type="entry name" value="T04325"/>
</dbReference>
<dbReference type="RefSeq" id="NP_001105895.1">
    <property type="nucleotide sequence ID" value="NM_001112425.1"/>
</dbReference>
<dbReference type="SMR" id="P93648"/>
<dbReference type="FunCoup" id="P93648">
    <property type="interactions" value="2664"/>
</dbReference>
<dbReference type="STRING" id="4577.P93648"/>
<dbReference type="PaxDb" id="4577-GRMZM2G113056_P01"/>
<dbReference type="GeneID" id="732810"/>
<dbReference type="KEGG" id="zma:732810"/>
<dbReference type="MaizeGDB" id="136450"/>
<dbReference type="eggNOG" id="KOG2004">
    <property type="taxonomic scope" value="Eukaryota"/>
</dbReference>
<dbReference type="HOGENOM" id="CLU_004109_4_3_1"/>
<dbReference type="InParanoid" id="P93648"/>
<dbReference type="OrthoDB" id="2411602at2759"/>
<dbReference type="Proteomes" id="UP000007305">
    <property type="component" value="Unplaced"/>
</dbReference>
<dbReference type="ExpressionAtlas" id="P93648">
    <property type="expression patterns" value="baseline and differential"/>
</dbReference>
<dbReference type="GO" id="GO:0005759">
    <property type="term" value="C:mitochondrial matrix"/>
    <property type="evidence" value="ECO:0000318"/>
    <property type="project" value="GO_Central"/>
</dbReference>
<dbReference type="GO" id="GO:0005524">
    <property type="term" value="F:ATP binding"/>
    <property type="evidence" value="ECO:0007669"/>
    <property type="project" value="UniProtKB-UniRule"/>
</dbReference>
<dbReference type="GO" id="GO:0016887">
    <property type="term" value="F:ATP hydrolysis activity"/>
    <property type="evidence" value="ECO:0007669"/>
    <property type="project" value="UniProtKB-UniRule"/>
</dbReference>
<dbReference type="GO" id="GO:0004176">
    <property type="term" value="F:ATP-dependent peptidase activity"/>
    <property type="evidence" value="ECO:0000318"/>
    <property type="project" value="GO_Central"/>
</dbReference>
<dbReference type="GO" id="GO:0043565">
    <property type="term" value="F:sequence-specific DNA binding"/>
    <property type="evidence" value="ECO:0007669"/>
    <property type="project" value="UniProtKB-UniRule"/>
</dbReference>
<dbReference type="GO" id="GO:0004252">
    <property type="term" value="F:serine-type endopeptidase activity"/>
    <property type="evidence" value="ECO:0007669"/>
    <property type="project" value="UniProtKB-UniRule"/>
</dbReference>
<dbReference type="GO" id="GO:0003697">
    <property type="term" value="F:single-stranded DNA binding"/>
    <property type="evidence" value="ECO:0000318"/>
    <property type="project" value="GO_Central"/>
</dbReference>
<dbReference type="GO" id="GO:0034599">
    <property type="term" value="P:cellular response to oxidative stress"/>
    <property type="evidence" value="ECO:0007669"/>
    <property type="project" value="UniProtKB-UniRule"/>
</dbReference>
<dbReference type="GO" id="GO:0051131">
    <property type="term" value="P:chaperone-mediated protein complex assembly"/>
    <property type="evidence" value="ECO:0000318"/>
    <property type="project" value="GO_Central"/>
</dbReference>
<dbReference type="GO" id="GO:0007005">
    <property type="term" value="P:mitochondrion organization"/>
    <property type="evidence" value="ECO:0000318"/>
    <property type="project" value="GO_Central"/>
</dbReference>
<dbReference type="GO" id="GO:0070407">
    <property type="term" value="P:oxidation-dependent protein catabolic process"/>
    <property type="evidence" value="ECO:0007669"/>
    <property type="project" value="UniProtKB-UniRule"/>
</dbReference>
<dbReference type="GO" id="GO:0006515">
    <property type="term" value="P:protein quality control for misfolded or incompletely synthesized proteins"/>
    <property type="evidence" value="ECO:0000318"/>
    <property type="project" value="GO_Central"/>
</dbReference>
<dbReference type="CDD" id="cd19500">
    <property type="entry name" value="RecA-like_Lon"/>
    <property type="match status" value="1"/>
</dbReference>
<dbReference type="FunFam" id="3.40.50.300:FF:000021">
    <property type="entry name" value="Lon protease homolog"/>
    <property type="match status" value="1"/>
</dbReference>
<dbReference type="FunFam" id="1.10.8.60:FF:000080">
    <property type="entry name" value="Lon protease homolog, mitochondrial"/>
    <property type="match status" value="1"/>
</dbReference>
<dbReference type="FunFam" id="1.20.5.5270:FF:000001">
    <property type="entry name" value="Lon protease homolog, mitochondrial"/>
    <property type="match status" value="1"/>
</dbReference>
<dbReference type="FunFam" id="1.20.58.1480:FF:000006">
    <property type="entry name" value="Lon protease homolog, mitochondrial"/>
    <property type="match status" value="1"/>
</dbReference>
<dbReference type="FunFam" id="2.30.130.40:FF:000007">
    <property type="entry name" value="Lon protease homolog, mitochondrial"/>
    <property type="match status" value="1"/>
</dbReference>
<dbReference type="FunFam" id="3.30.230.10:FF:000015">
    <property type="entry name" value="Lon protease homolog, mitochondrial"/>
    <property type="match status" value="1"/>
</dbReference>
<dbReference type="Gene3D" id="1.10.8.60">
    <property type="match status" value="1"/>
</dbReference>
<dbReference type="Gene3D" id="1.20.5.5270">
    <property type="match status" value="1"/>
</dbReference>
<dbReference type="Gene3D" id="1.20.58.1480">
    <property type="match status" value="1"/>
</dbReference>
<dbReference type="Gene3D" id="3.30.230.10">
    <property type="match status" value="1"/>
</dbReference>
<dbReference type="Gene3D" id="2.30.130.40">
    <property type="entry name" value="LON domain-like"/>
    <property type="match status" value="1"/>
</dbReference>
<dbReference type="Gene3D" id="3.40.50.300">
    <property type="entry name" value="P-loop containing nucleotide triphosphate hydrolases"/>
    <property type="match status" value="1"/>
</dbReference>
<dbReference type="HAMAP" id="MF_03120">
    <property type="entry name" value="lonm_euk"/>
    <property type="match status" value="1"/>
</dbReference>
<dbReference type="InterPro" id="IPR003593">
    <property type="entry name" value="AAA+_ATPase"/>
</dbReference>
<dbReference type="InterPro" id="IPR003959">
    <property type="entry name" value="ATPase_AAA_core"/>
</dbReference>
<dbReference type="InterPro" id="IPR004815">
    <property type="entry name" value="Lon_bac/euk-typ"/>
</dbReference>
<dbReference type="InterPro" id="IPR054594">
    <property type="entry name" value="Lon_lid"/>
</dbReference>
<dbReference type="InterPro" id="IPR008269">
    <property type="entry name" value="Lon_proteolytic"/>
</dbReference>
<dbReference type="InterPro" id="IPR027065">
    <property type="entry name" value="Lon_Prtase"/>
</dbReference>
<dbReference type="InterPro" id="IPR003111">
    <property type="entry name" value="Lon_prtase_N"/>
</dbReference>
<dbReference type="InterPro" id="IPR046336">
    <property type="entry name" value="Lon_prtase_N_sf"/>
</dbReference>
<dbReference type="InterPro" id="IPR027503">
    <property type="entry name" value="Lonm_euk"/>
</dbReference>
<dbReference type="InterPro" id="IPR027417">
    <property type="entry name" value="P-loop_NTPase"/>
</dbReference>
<dbReference type="InterPro" id="IPR008268">
    <property type="entry name" value="Peptidase_S16_AS"/>
</dbReference>
<dbReference type="InterPro" id="IPR015947">
    <property type="entry name" value="PUA-like_sf"/>
</dbReference>
<dbReference type="InterPro" id="IPR020568">
    <property type="entry name" value="Ribosomal_Su5_D2-typ_SF"/>
</dbReference>
<dbReference type="InterPro" id="IPR014721">
    <property type="entry name" value="Ribsml_uS5_D2-typ_fold_subgr"/>
</dbReference>
<dbReference type="NCBIfam" id="TIGR00763">
    <property type="entry name" value="lon"/>
    <property type="match status" value="1"/>
</dbReference>
<dbReference type="PANTHER" id="PTHR43718">
    <property type="entry name" value="LON PROTEASE"/>
    <property type="match status" value="1"/>
</dbReference>
<dbReference type="PANTHER" id="PTHR43718:SF2">
    <property type="entry name" value="LON PROTEASE HOMOLOG, MITOCHONDRIAL"/>
    <property type="match status" value="1"/>
</dbReference>
<dbReference type="Pfam" id="PF00004">
    <property type="entry name" value="AAA"/>
    <property type="match status" value="1"/>
</dbReference>
<dbReference type="Pfam" id="PF05362">
    <property type="entry name" value="Lon_C"/>
    <property type="match status" value="1"/>
</dbReference>
<dbReference type="Pfam" id="PF22667">
    <property type="entry name" value="Lon_lid"/>
    <property type="match status" value="1"/>
</dbReference>
<dbReference type="Pfam" id="PF02190">
    <property type="entry name" value="LON_substr_bdg"/>
    <property type="match status" value="1"/>
</dbReference>
<dbReference type="PRINTS" id="PR00830">
    <property type="entry name" value="ENDOLAPTASE"/>
</dbReference>
<dbReference type="SMART" id="SM00382">
    <property type="entry name" value="AAA"/>
    <property type="match status" value="1"/>
</dbReference>
<dbReference type="SMART" id="SM00464">
    <property type="entry name" value="LON"/>
    <property type="match status" value="1"/>
</dbReference>
<dbReference type="SUPFAM" id="SSF52540">
    <property type="entry name" value="P-loop containing nucleoside triphosphate hydrolases"/>
    <property type="match status" value="1"/>
</dbReference>
<dbReference type="SUPFAM" id="SSF88697">
    <property type="entry name" value="PUA domain-like"/>
    <property type="match status" value="1"/>
</dbReference>
<dbReference type="SUPFAM" id="SSF54211">
    <property type="entry name" value="Ribosomal protein S5 domain 2-like"/>
    <property type="match status" value="1"/>
</dbReference>
<dbReference type="PROSITE" id="PS51787">
    <property type="entry name" value="LON_N"/>
    <property type="match status" value="1"/>
</dbReference>
<dbReference type="PROSITE" id="PS51786">
    <property type="entry name" value="LON_PROTEOLYTIC"/>
    <property type="match status" value="1"/>
</dbReference>
<dbReference type="PROSITE" id="PS01046">
    <property type="entry name" value="LON_SER"/>
    <property type="match status" value="1"/>
</dbReference>
<gene>
    <name type="primary">LON2</name>
</gene>
<accession>P93648</accession>
<protein>
    <recommendedName>
        <fullName evidence="2">Lon protease homolog, mitochondrial</fullName>
        <ecNumber evidence="2">3.4.21.53</ecNumber>
    </recommendedName>
</protein>
<organism>
    <name type="scientific">Zea mays</name>
    <name type="common">Maize</name>
    <dbReference type="NCBI Taxonomy" id="4577"/>
    <lineage>
        <taxon>Eukaryota</taxon>
        <taxon>Viridiplantae</taxon>
        <taxon>Streptophyta</taxon>
        <taxon>Embryophyta</taxon>
        <taxon>Tracheophyta</taxon>
        <taxon>Spermatophyta</taxon>
        <taxon>Magnoliopsida</taxon>
        <taxon>Liliopsida</taxon>
        <taxon>Poales</taxon>
        <taxon>Poaceae</taxon>
        <taxon>PACMAD clade</taxon>
        <taxon>Panicoideae</taxon>
        <taxon>Andropogonodae</taxon>
        <taxon>Andropogoneae</taxon>
        <taxon>Tripsacinae</taxon>
        <taxon>Zea</taxon>
    </lineage>
</organism>
<proteinExistence type="evidence at protein level"/>
<reference key="1">
    <citation type="journal article" date="1998" name="Plant Mol. Biol.">
        <title>Maize contains a Lon protease gene that can partially complement a yeast pim1-deletion mutant.</title>
        <authorList>
            <person name="Barakat S."/>
            <person name="Pearce D.A."/>
            <person name="Sherman F."/>
            <person name="Rapp W.D."/>
        </authorList>
    </citation>
    <scope>NUCLEOTIDE SEQUENCE [MRNA]</scope>
    <source>
        <strain>cv. B73</strain>
    </source>
</reference>
<reference key="2">
    <citation type="journal article" date="1998" name="Biologia">
        <title>ATP-dependent Lon protease from maize mitochondria - comparison with the other Lon proteases.</title>
        <authorList>
            <person name="Mertova J."/>
            <person name="Almasiova M."/>
            <person name="Perecko D."/>
            <person name="Bilka F."/>
            <person name="Benesova M."/>
            <person name="Bezakova L."/>
            <person name="Psenak M."/>
            <person name="Kutejova E."/>
        </authorList>
    </citation>
    <scope>FUNCTION</scope>
    <scope>BIOPHYSICOCHEMICAL PROPERTIES</scope>
    <scope>SUBCELLULAR LOCATION</scope>
    <scope>SUBUNIT</scope>
</reference>
<feature type="chain" id="PRO_0000026740" description="Lon protease homolog, mitochondrial">
    <location>
        <begin position="1"/>
        <end position="964"/>
    </location>
</feature>
<feature type="domain" description="Lon N-terminal" evidence="4">
    <location>
        <begin position="89"/>
        <end position="300"/>
    </location>
</feature>
<feature type="domain" description="Lon proteolytic" evidence="3">
    <location>
        <begin position="773"/>
        <end position="957"/>
    </location>
</feature>
<feature type="region of interest" description="Disordered" evidence="5">
    <location>
        <begin position="663"/>
        <end position="740"/>
    </location>
</feature>
<feature type="compositionally biased region" description="Polar residues" evidence="5">
    <location>
        <begin position="673"/>
        <end position="687"/>
    </location>
</feature>
<feature type="compositionally biased region" description="Basic and acidic residues" evidence="5">
    <location>
        <begin position="688"/>
        <end position="698"/>
    </location>
</feature>
<feature type="compositionally biased region" description="Polar residues" evidence="5">
    <location>
        <begin position="703"/>
        <end position="712"/>
    </location>
</feature>
<feature type="active site" evidence="2">
    <location>
        <position position="863"/>
    </location>
</feature>
<feature type="active site" evidence="2">
    <location>
        <position position="906"/>
    </location>
</feature>
<feature type="binding site" evidence="2">
    <location>
        <begin position="455"/>
        <end position="462"/>
    </location>
    <ligand>
        <name>ATP</name>
        <dbReference type="ChEBI" id="CHEBI:30616"/>
    </ligand>
</feature>
<comment type="function">
    <text evidence="2 6">ATP-dependent serine protease that mediates the selective degradation of misfolded, unassembled or oxidatively damaged polypeptides as well as certain short-lived regulatory proteins in the mitochondrial matrix. May also have a chaperone function in the assembly of inner membrane protein complexes. Participates in the regulation of mitochondrial gene expression and in the maintenance of the integrity of the mitochondrial genome. Binds to mitochondrial DNA in a site-specific manner.</text>
</comment>
<comment type="catalytic activity">
    <reaction evidence="2">
        <text>Hydrolysis of proteins in presence of ATP.</text>
        <dbReference type="EC" id="3.4.21.53"/>
    </reaction>
</comment>
<comment type="biophysicochemical properties">
    <phDependence>
        <text evidence="6">Optimum pH is 8.5-9.0.</text>
    </phDependence>
    <temperatureDependence>
        <text evidence="6">Optimum temperature is 40-45 degrees Celsius.</text>
    </temperatureDependence>
</comment>
<comment type="subunit">
    <text evidence="1">Homoheptamer. Organized in a ring with a central cavity (By similarity).</text>
</comment>
<comment type="subcellular location">
    <subcellularLocation>
        <location evidence="2 6">Mitochondrion matrix</location>
    </subcellularLocation>
</comment>
<comment type="miscellaneous">
    <text evidence="2">This protein may be expected to contain an N-terminal transit peptide but none has been predicted.</text>
</comment>
<comment type="similarity">
    <text evidence="2">Belongs to the peptidase S16 family.</text>
</comment>
<evidence type="ECO:0000250" key="1"/>
<evidence type="ECO:0000255" key="2">
    <source>
        <dbReference type="HAMAP-Rule" id="MF_03120"/>
    </source>
</evidence>
<evidence type="ECO:0000255" key="3">
    <source>
        <dbReference type="PROSITE-ProRule" id="PRU01122"/>
    </source>
</evidence>
<evidence type="ECO:0000255" key="4">
    <source>
        <dbReference type="PROSITE-ProRule" id="PRU01123"/>
    </source>
</evidence>
<evidence type="ECO:0000256" key="5">
    <source>
        <dbReference type="SAM" id="MobiDB-lite"/>
    </source>
</evidence>
<evidence type="ECO:0000269" key="6">
    <source ref="2"/>
</evidence>
<keyword id="KW-0067">ATP-binding</keyword>
<keyword id="KW-0238">DNA-binding</keyword>
<keyword id="KW-0378">Hydrolase</keyword>
<keyword id="KW-0496">Mitochondrion</keyword>
<keyword id="KW-0547">Nucleotide-binding</keyword>
<keyword id="KW-0645">Protease</keyword>
<keyword id="KW-1185">Reference proteome</keyword>
<keyword id="KW-0720">Serine protease</keyword>